<evidence type="ECO:0000255" key="1">
    <source>
        <dbReference type="HAMAP-Rule" id="MF_00540"/>
    </source>
</evidence>
<reference key="1">
    <citation type="submission" date="2006-06" db="EMBL/GenBank/DDBJ databases">
        <title>Complete sequence of chromosome of Mycobacterium sp. MCS.</title>
        <authorList>
            <consortium name="US DOE Joint Genome Institute"/>
            <person name="Copeland A."/>
            <person name="Lucas S."/>
            <person name="Lapidus A."/>
            <person name="Barry K."/>
            <person name="Detter J.C."/>
            <person name="Glavina del Rio T."/>
            <person name="Hammon N."/>
            <person name="Israni S."/>
            <person name="Dalin E."/>
            <person name="Tice H."/>
            <person name="Pitluck S."/>
            <person name="Martinez M."/>
            <person name="Schmutz J."/>
            <person name="Larimer F."/>
            <person name="Land M."/>
            <person name="Hauser L."/>
            <person name="Kyrpides N."/>
            <person name="Kim E."/>
            <person name="Miller C.D."/>
            <person name="Hughes J.E."/>
            <person name="Anderson A.J."/>
            <person name="Sims R.C."/>
            <person name="Richardson P."/>
        </authorList>
    </citation>
    <scope>NUCLEOTIDE SEQUENCE [LARGE SCALE GENOMIC DNA]</scope>
    <source>
        <strain>MCS</strain>
    </source>
</reference>
<accession>Q1BCN9</accession>
<comment type="function">
    <text evidence="1">Catalyzes the hydrolytic deamination of adenosine and 2-deoxyadenosine.</text>
</comment>
<comment type="catalytic activity">
    <reaction evidence="1">
        <text>adenosine + H2O + H(+) = inosine + NH4(+)</text>
        <dbReference type="Rhea" id="RHEA:24408"/>
        <dbReference type="ChEBI" id="CHEBI:15377"/>
        <dbReference type="ChEBI" id="CHEBI:15378"/>
        <dbReference type="ChEBI" id="CHEBI:16335"/>
        <dbReference type="ChEBI" id="CHEBI:17596"/>
        <dbReference type="ChEBI" id="CHEBI:28938"/>
        <dbReference type="EC" id="3.5.4.4"/>
    </reaction>
    <physiologicalReaction direction="left-to-right" evidence="1">
        <dbReference type="Rhea" id="RHEA:24409"/>
    </physiologicalReaction>
</comment>
<comment type="catalytic activity">
    <reaction evidence="1">
        <text>2'-deoxyadenosine + H2O + H(+) = 2'-deoxyinosine + NH4(+)</text>
        <dbReference type="Rhea" id="RHEA:28190"/>
        <dbReference type="ChEBI" id="CHEBI:15377"/>
        <dbReference type="ChEBI" id="CHEBI:15378"/>
        <dbReference type="ChEBI" id="CHEBI:17256"/>
        <dbReference type="ChEBI" id="CHEBI:28938"/>
        <dbReference type="ChEBI" id="CHEBI:28997"/>
        <dbReference type="EC" id="3.5.4.4"/>
    </reaction>
    <physiologicalReaction direction="left-to-right" evidence="1">
        <dbReference type="Rhea" id="RHEA:28191"/>
    </physiologicalReaction>
</comment>
<comment type="cofactor">
    <cofactor evidence="1">
        <name>Zn(2+)</name>
        <dbReference type="ChEBI" id="CHEBI:29105"/>
    </cofactor>
    <text evidence="1">Binds 1 zinc ion per subunit.</text>
</comment>
<comment type="similarity">
    <text evidence="1">Belongs to the metallo-dependent hydrolases superfamily. Adenosine and AMP deaminases family. Adenosine deaminase subfamily.</text>
</comment>
<keyword id="KW-0378">Hydrolase</keyword>
<keyword id="KW-0479">Metal-binding</keyword>
<keyword id="KW-0546">Nucleotide metabolism</keyword>
<keyword id="KW-0862">Zinc</keyword>
<dbReference type="EC" id="3.5.4.4" evidence="1"/>
<dbReference type="EMBL" id="CP000384">
    <property type="protein sequence ID" value="ABG07345.1"/>
    <property type="molecule type" value="Genomic_DNA"/>
</dbReference>
<dbReference type="SMR" id="Q1BCN9"/>
<dbReference type="KEGG" id="mmc:Mmcs_1233"/>
<dbReference type="HOGENOM" id="CLU_039228_0_0_11"/>
<dbReference type="BioCyc" id="MSP164756:G1G6O-1259-MONOMER"/>
<dbReference type="GO" id="GO:0005829">
    <property type="term" value="C:cytosol"/>
    <property type="evidence" value="ECO:0007669"/>
    <property type="project" value="TreeGrafter"/>
</dbReference>
<dbReference type="GO" id="GO:0046936">
    <property type="term" value="F:2'-deoxyadenosine deaminase activity"/>
    <property type="evidence" value="ECO:0007669"/>
    <property type="project" value="RHEA"/>
</dbReference>
<dbReference type="GO" id="GO:0004000">
    <property type="term" value="F:adenosine deaminase activity"/>
    <property type="evidence" value="ECO:0007669"/>
    <property type="project" value="UniProtKB-UniRule"/>
</dbReference>
<dbReference type="GO" id="GO:0008270">
    <property type="term" value="F:zinc ion binding"/>
    <property type="evidence" value="ECO:0007669"/>
    <property type="project" value="UniProtKB-UniRule"/>
</dbReference>
<dbReference type="GO" id="GO:0006154">
    <property type="term" value="P:adenosine catabolic process"/>
    <property type="evidence" value="ECO:0007669"/>
    <property type="project" value="TreeGrafter"/>
</dbReference>
<dbReference type="GO" id="GO:0043103">
    <property type="term" value="P:hypoxanthine salvage"/>
    <property type="evidence" value="ECO:0007669"/>
    <property type="project" value="TreeGrafter"/>
</dbReference>
<dbReference type="GO" id="GO:0046103">
    <property type="term" value="P:inosine biosynthetic process"/>
    <property type="evidence" value="ECO:0007669"/>
    <property type="project" value="TreeGrafter"/>
</dbReference>
<dbReference type="GO" id="GO:0009117">
    <property type="term" value="P:nucleotide metabolic process"/>
    <property type="evidence" value="ECO:0007669"/>
    <property type="project" value="UniProtKB-KW"/>
</dbReference>
<dbReference type="GO" id="GO:0009168">
    <property type="term" value="P:purine ribonucleoside monophosphate biosynthetic process"/>
    <property type="evidence" value="ECO:0007669"/>
    <property type="project" value="UniProtKB-UniRule"/>
</dbReference>
<dbReference type="FunFam" id="3.20.20.140:FF:000020">
    <property type="entry name" value="Adenosine deaminase"/>
    <property type="match status" value="1"/>
</dbReference>
<dbReference type="Gene3D" id="3.20.20.140">
    <property type="entry name" value="Metal-dependent hydrolases"/>
    <property type="match status" value="1"/>
</dbReference>
<dbReference type="HAMAP" id="MF_00540">
    <property type="entry name" value="A_deaminase"/>
    <property type="match status" value="1"/>
</dbReference>
<dbReference type="InterPro" id="IPR028893">
    <property type="entry name" value="A_deaminase"/>
</dbReference>
<dbReference type="InterPro" id="IPR001365">
    <property type="entry name" value="A_deaminase_dom"/>
</dbReference>
<dbReference type="InterPro" id="IPR006330">
    <property type="entry name" value="Ado/ade_deaminase"/>
</dbReference>
<dbReference type="InterPro" id="IPR032466">
    <property type="entry name" value="Metal_Hydrolase"/>
</dbReference>
<dbReference type="NCBIfam" id="TIGR01430">
    <property type="entry name" value="aden_deam"/>
    <property type="match status" value="1"/>
</dbReference>
<dbReference type="NCBIfam" id="NF006847">
    <property type="entry name" value="PRK09358.1-2"/>
    <property type="match status" value="1"/>
</dbReference>
<dbReference type="PANTHER" id="PTHR11409">
    <property type="entry name" value="ADENOSINE DEAMINASE"/>
    <property type="match status" value="1"/>
</dbReference>
<dbReference type="PANTHER" id="PTHR11409:SF43">
    <property type="entry name" value="ADENOSINE DEAMINASE"/>
    <property type="match status" value="1"/>
</dbReference>
<dbReference type="Pfam" id="PF00962">
    <property type="entry name" value="A_deaminase"/>
    <property type="match status" value="1"/>
</dbReference>
<dbReference type="SUPFAM" id="SSF51556">
    <property type="entry name" value="Metallo-dependent hydrolases"/>
    <property type="match status" value="1"/>
</dbReference>
<proteinExistence type="inferred from homology"/>
<organism>
    <name type="scientific">Mycobacterium sp. (strain MCS)</name>
    <dbReference type="NCBI Taxonomy" id="164756"/>
    <lineage>
        <taxon>Bacteria</taxon>
        <taxon>Bacillati</taxon>
        <taxon>Actinomycetota</taxon>
        <taxon>Actinomycetes</taxon>
        <taxon>Mycobacteriales</taxon>
        <taxon>Mycobacteriaceae</taxon>
        <taxon>Mycobacterium</taxon>
    </lineage>
</organism>
<feature type="chain" id="PRO_1000017672" description="Adenosine deaminase">
    <location>
        <begin position="1"/>
        <end position="362"/>
    </location>
</feature>
<feature type="active site" description="Proton donor" evidence="1">
    <location>
        <position position="211"/>
    </location>
</feature>
<feature type="binding site" evidence="1">
    <location>
        <position position="19"/>
    </location>
    <ligand>
        <name>Zn(2+)</name>
        <dbReference type="ChEBI" id="CHEBI:29105"/>
        <note>catalytic</note>
    </ligand>
</feature>
<feature type="binding site" evidence="1">
    <location>
        <position position="21"/>
    </location>
    <ligand>
        <name>substrate</name>
    </ligand>
</feature>
<feature type="binding site" evidence="1">
    <location>
        <position position="21"/>
    </location>
    <ligand>
        <name>Zn(2+)</name>
        <dbReference type="ChEBI" id="CHEBI:29105"/>
        <note>catalytic</note>
    </ligand>
</feature>
<feature type="binding site" evidence="1">
    <location>
        <position position="23"/>
    </location>
    <ligand>
        <name>substrate</name>
    </ligand>
</feature>
<feature type="binding site" evidence="1">
    <location>
        <position position="181"/>
    </location>
    <ligand>
        <name>substrate</name>
    </ligand>
</feature>
<feature type="binding site" evidence="1">
    <location>
        <position position="208"/>
    </location>
    <ligand>
        <name>Zn(2+)</name>
        <dbReference type="ChEBI" id="CHEBI:29105"/>
        <note>catalytic</note>
    </ligand>
</feature>
<feature type="binding site" evidence="1">
    <location>
        <position position="300"/>
    </location>
    <ligand>
        <name>Zn(2+)</name>
        <dbReference type="ChEBI" id="CHEBI:29105"/>
        <note>catalytic</note>
    </ligand>
</feature>
<feature type="site" description="Important for catalytic activity" evidence="1">
    <location>
        <position position="232"/>
    </location>
</feature>
<sequence>MTTPLTLENISQAPKALLHDHLDGGLRPSTVLELAGQYGYDDLPADDVDELATFFRTAAHSGSLVRYLEPFAHTVGVMQTAEALHRVAFECVEDLAGDNVVYAEVRFAPELHIEGGMGLDAVVDAVLAGFADGEKAAASAGRTITVRCLVTAMRHAARSREIAELAIRFRDRGVVGFDIAGAEAGYPPTRHLDAFEYMRGNNARFTIHAGEAFGLPSIHEAIAFCGADRLGHGVRIVDDITVAPDGQVKLGRLAAILRDKRIPLELCPSSNVQTGAVASIAEHPFDLLARTRFRVTVNTDNRLMSDTSMSQEMLRLVEAFGYGWSDLARFTINAMKSSFIPFDERLALIDDVIKPRYAVLAG</sequence>
<name>ADD_MYCSS</name>
<protein>
    <recommendedName>
        <fullName evidence="1">Adenosine deaminase</fullName>
        <ecNumber evidence="1">3.5.4.4</ecNumber>
    </recommendedName>
    <alternativeName>
        <fullName evidence="1">Adenosine aminohydrolase</fullName>
    </alternativeName>
</protein>
<gene>
    <name evidence="1" type="primary">add</name>
    <name type="ordered locus">Mmcs_1233</name>
</gene>